<keyword id="KW-1003">Cell membrane</keyword>
<keyword id="KW-0145">Chemotaxis</keyword>
<keyword id="KW-1015">Disulfide bond</keyword>
<keyword id="KW-0297">G-protein coupled receptor</keyword>
<keyword id="KW-0325">Glycoprotein</keyword>
<keyword id="KW-0472">Membrane</keyword>
<keyword id="KW-0675">Receptor</keyword>
<keyword id="KW-1185">Reference proteome</keyword>
<keyword id="KW-0807">Transducer</keyword>
<keyword id="KW-0812">Transmembrane</keyword>
<keyword id="KW-1133">Transmembrane helix</keyword>
<dbReference type="EMBL" id="D50872">
    <property type="protein sequence ID" value="BAA09468.1"/>
    <property type="molecule type" value="Genomic_DNA"/>
</dbReference>
<dbReference type="EMBL" id="AK032547">
    <property type="protein sequence ID" value="BAC27919.1"/>
    <property type="molecule type" value="mRNA"/>
</dbReference>
<dbReference type="EMBL" id="CR931794">
    <property type="status" value="NOT_ANNOTATED_CDS"/>
    <property type="molecule type" value="Genomic_DNA"/>
</dbReference>
<dbReference type="CCDS" id="CCDS38899.1"/>
<dbReference type="PIR" id="S63666">
    <property type="entry name" value="S63666"/>
</dbReference>
<dbReference type="RefSeq" id="NP_001074680.1">
    <property type="nucleotide sequence ID" value="NM_001081211.3"/>
</dbReference>
<dbReference type="SMR" id="Q62035"/>
<dbReference type="FunCoup" id="Q62035">
    <property type="interactions" value="1628"/>
</dbReference>
<dbReference type="STRING" id="10090.ENSMUSP00000070925"/>
<dbReference type="BindingDB" id="Q62035"/>
<dbReference type="ChEMBL" id="CHEMBL3993"/>
<dbReference type="GuidetoPHARMACOLOGY" id="334"/>
<dbReference type="GlyCosmos" id="Q62035">
    <property type="glycosylation" value="2 sites, No reported glycans"/>
</dbReference>
<dbReference type="GlyGen" id="Q62035">
    <property type="glycosylation" value="2 sites"/>
</dbReference>
<dbReference type="iPTMnet" id="Q62035"/>
<dbReference type="PhosphoSitePlus" id="Q62035"/>
<dbReference type="PaxDb" id="10090-ENSMUSP00000070925"/>
<dbReference type="ProteomicsDB" id="301893"/>
<dbReference type="Antibodypedia" id="30903">
    <property type="antibodies" value="179 antibodies from 26 providers"/>
</dbReference>
<dbReference type="DNASU" id="19204"/>
<dbReference type="Ensembl" id="ENSMUST00000070690.8">
    <property type="protein sequence ID" value="ENSMUSP00000070925.8"/>
    <property type="gene ID" value="ENSMUSG00000056529.8"/>
</dbReference>
<dbReference type="GeneID" id="19204"/>
<dbReference type="KEGG" id="mmu:19204"/>
<dbReference type="UCSC" id="uc008vbn.1">
    <property type="organism name" value="mouse"/>
</dbReference>
<dbReference type="AGR" id="MGI:106066"/>
<dbReference type="CTD" id="5724"/>
<dbReference type="MGI" id="MGI:106066">
    <property type="gene designation" value="Ptafr"/>
</dbReference>
<dbReference type="VEuPathDB" id="HostDB:ENSMUSG00000056529"/>
<dbReference type="eggNOG" id="ENOG502QTQI">
    <property type="taxonomic scope" value="Eukaryota"/>
</dbReference>
<dbReference type="GeneTree" id="ENSGT01110000267167"/>
<dbReference type="HOGENOM" id="CLU_009579_8_2_1"/>
<dbReference type="InParanoid" id="Q62035"/>
<dbReference type="OMA" id="WNIVIIR"/>
<dbReference type="OrthoDB" id="5985406at2759"/>
<dbReference type="PhylomeDB" id="Q62035"/>
<dbReference type="TreeFam" id="TF350009"/>
<dbReference type="Reactome" id="R-MMU-373076">
    <property type="pathway name" value="Class A/1 (Rhodopsin-like receptors)"/>
</dbReference>
<dbReference type="Reactome" id="R-MMU-416476">
    <property type="pathway name" value="G alpha (q) signalling events"/>
</dbReference>
<dbReference type="Reactome" id="R-MMU-6798695">
    <property type="pathway name" value="Neutrophil degranulation"/>
</dbReference>
<dbReference type="BioGRID-ORCS" id="19204">
    <property type="hits" value="4 hits in 78 CRISPR screens"/>
</dbReference>
<dbReference type="ChiTaRS" id="Ptafr">
    <property type="organism name" value="mouse"/>
</dbReference>
<dbReference type="PRO" id="PR:Q62035"/>
<dbReference type="Proteomes" id="UP000000589">
    <property type="component" value="Chromosome 4"/>
</dbReference>
<dbReference type="RNAct" id="Q62035">
    <property type="molecule type" value="protein"/>
</dbReference>
<dbReference type="Bgee" id="ENSMUSG00000056529">
    <property type="expression patterns" value="Expressed in granulocyte and 50 other cell types or tissues"/>
</dbReference>
<dbReference type="GO" id="GO:0005886">
    <property type="term" value="C:plasma membrane"/>
    <property type="evidence" value="ECO:0007669"/>
    <property type="project" value="UniProtKB-SubCell"/>
</dbReference>
<dbReference type="GO" id="GO:0001530">
    <property type="term" value="F:lipopolysaccharide binding"/>
    <property type="evidence" value="ECO:0000315"/>
    <property type="project" value="MGI"/>
</dbReference>
<dbReference type="GO" id="GO:0001875">
    <property type="term" value="F:lipopolysaccharide immune receptor activity"/>
    <property type="evidence" value="ECO:0000315"/>
    <property type="project" value="MGI"/>
</dbReference>
<dbReference type="GO" id="GO:0005543">
    <property type="term" value="F:phospholipid binding"/>
    <property type="evidence" value="ECO:0007669"/>
    <property type="project" value="Ensembl"/>
</dbReference>
<dbReference type="GO" id="GO:0004992">
    <property type="term" value="F:platelet activating factor receptor activity"/>
    <property type="evidence" value="ECO:0007669"/>
    <property type="project" value="Ensembl"/>
</dbReference>
<dbReference type="GO" id="GO:0006935">
    <property type="term" value="P:chemotaxis"/>
    <property type="evidence" value="ECO:0007669"/>
    <property type="project" value="UniProtKB-KW"/>
</dbReference>
<dbReference type="GO" id="GO:0006954">
    <property type="term" value="P:inflammatory response"/>
    <property type="evidence" value="ECO:0000315"/>
    <property type="project" value="MGI"/>
</dbReference>
<dbReference type="GO" id="GO:0032959">
    <property type="term" value="P:inositol trisphosphate biosynthetic process"/>
    <property type="evidence" value="ECO:0000315"/>
    <property type="project" value="MGI"/>
</dbReference>
<dbReference type="GO" id="GO:0007200">
    <property type="term" value="P:phospholipase C-activating G protein-coupled receptor signaling pathway"/>
    <property type="evidence" value="ECO:0007669"/>
    <property type="project" value="Ensembl"/>
</dbReference>
<dbReference type="GO" id="GO:0032496">
    <property type="term" value="P:response to lipopolysaccharide"/>
    <property type="evidence" value="ECO:0000315"/>
    <property type="project" value="MGI"/>
</dbReference>
<dbReference type="CDD" id="cd15147">
    <property type="entry name" value="7tmA_PAFR"/>
    <property type="match status" value="1"/>
</dbReference>
<dbReference type="FunFam" id="1.20.1070.10:FF:000204">
    <property type="entry name" value="platelet-activating factor receptor"/>
    <property type="match status" value="1"/>
</dbReference>
<dbReference type="Gene3D" id="1.20.1070.10">
    <property type="entry name" value="Rhodopsin 7-helix transmembrane proteins"/>
    <property type="match status" value="1"/>
</dbReference>
<dbReference type="InterPro" id="IPR000276">
    <property type="entry name" value="GPCR_Rhodpsn"/>
</dbReference>
<dbReference type="InterPro" id="IPR017452">
    <property type="entry name" value="GPCR_Rhodpsn_7TM"/>
</dbReference>
<dbReference type="InterPro" id="IPR002282">
    <property type="entry name" value="PAF_rcpt"/>
</dbReference>
<dbReference type="PANTHER" id="PTHR24233">
    <property type="entry name" value="P2Y PURINOCEPTOR-RELATED G-PROTEIN COUPLED RECEPTOR"/>
    <property type="match status" value="1"/>
</dbReference>
<dbReference type="PANTHER" id="PTHR24233:SF6">
    <property type="entry name" value="PLATELET-ACTIVATING FACTOR RECEPTOR"/>
    <property type="match status" value="1"/>
</dbReference>
<dbReference type="Pfam" id="PF00001">
    <property type="entry name" value="7tm_1"/>
    <property type="match status" value="1"/>
</dbReference>
<dbReference type="PRINTS" id="PR00237">
    <property type="entry name" value="GPCRRHODOPSN"/>
</dbReference>
<dbReference type="PRINTS" id="PR01153">
    <property type="entry name" value="PAFRECEPTOR"/>
</dbReference>
<dbReference type="SUPFAM" id="SSF81321">
    <property type="entry name" value="Family A G protein-coupled receptor-like"/>
    <property type="match status" value="1"/>
</dbReference>
<dbReference type="PROSITE" id="PS00237">
    <property type="entry name" value="G_PROTEIN_RECEP_F1_1"/>
    <property type="match status" value="1"/>
</dbReference>
<dbReference type="PROSITE" id="PS50262">
    <property type="entry name" value="G_PROTEIN_RECEP_F1_2"/>
    <property type="match status" value="1"/>
</dbReference>
<feature type="chain" id="PRO_0000070094" description="Platelet-activating factor receptor">
    <location>
        <begin position="1"/>
        <end position="341"/>
    </location>
</feature>
<feature type="topological domain" description="Extracellular" evidence="2">
    <location>
        <begin position="1"/>
        <end position="16"/>
    </location>
</feature>
<feature type="transmembrane region" description="Helical; Name=1" evidence="2">
    <location>
        <begin position="17"/>
        <end position="38"/>
    </location>
</feature>
<feature type="topological domain" description="Cytoplasmic" evidence="2">
    <location>
        <begin position="39"/>
        <end position="54"/>
    </location>
</feature>
<feature type="transmembrane region" description="Helical; Name=2" evidence="2">
    <location>
        <begin position="55"/>
        <end position="74"/>
    </location>
</feature>
<feature type="topological domain" description="Extracellular" evidence="2">
    <location>
        <begin position="75"/>
        <end position="91"/>
    </location>
</feature>
<feature type="transmembrane region" description="Helical; Name=3" evidence="2">
    <location>
        <begin position="92"/>
        <end position="113"/>
    </location>
</feature>
<feature type="topological domain" description="Cytoplasmic" evidence="2">
    <location>
        <begin position="114"/>
        <end position="133"/>
    </location>
</feature>
<feature type="transmembrane region" description="Helical; Name=4" evidence="2">
    <location>
        <begin position="134"/>
        <end position="155"/>
    </location>
</feature>
<feature type="topological domain" description="Extracellular" evidence="2">
    <location>
        <begin position="156"/>
        <end position="184"/>
    </location>
</feature>
<feature type="transmembrane region" description="Helical; Name=5" evidence="2">
    <location>
        <begin position="185"/>
        <end position="205"/>
    </location>
</feature>
<feature type="topological domain" description="Cytoplasmic" evidence="2">
    <location>
        <begin position="206"/>
        <end position="233"/>
    </location>
</feature>
<feature type="transmembrane region" description="Helical; Name=6" evidence="2">
    <location>
        <begin position="234"/>
        <end position="254"/>
    </location>
</feature>
<feature type="topological domain" description="Extracellular" evidence="2">
    <location>
        <begin position="255"/>
        <end position="275"/>
    </location>
</feature>
<feature type="transmembrane region" description="Helical; Name=7" evidence="2">
    <location>
        <begin position="276"/>
        <end position="295"/>
    </location>
</feature>
<feature type="topological domain" description="Cytoplasmic" evidence="2">
    <location>
        <begin position="296"/>
        <end position="341"/>
    </location>
</feature>
<feature type="glycosylation site" description="N-linked (GlcNAc...) asparagine" evidence="2">
    <location>
        <position position="4"/>
    </location>
</feature>
<feature type="glycosylation site" description="N-linked (GlcNAc...) asparagine" evidence="2">
    <location>
        <position position="169"/>
    </location>
</feature>
<feature type="disulfide bond" evidence="3">
    <location>
        <begin position="90"/>
        <end position="173"/>
    </location>
</feature>
<feature type="sequence conflict" description="In Ref. 2; BAC27919." evidence="5" ref="2">
    <original>SV</original>
    <variation>RG</variation>
    <location>
        <begin position="181"/>
        <end position="182"/>
    </location>
</feature>
<sequence length="341" mass="39148">MEHNGSFRVDSEFRYTLFPIVYSVIFILGVVANGYVLWVFANLYPSKKLNEIKIFMVNLTMADLLFLITLPLWIVYYYNEGDWILPNFLCNVAGCLFFINTYCSVAFLGVITYNRYQAVAYPIKTAQATTRKRGISLSLIIWVSIVATASYFLATDSTNLVPNKDGSGNITRCFEHYEPYSVPILVVHVFIAFCFFLVFFLIFYCNLVIIHTLLTQPMRQQRKAGVKRRALWMVCTVLAVFIICFVPHHVVQLPWTLAELGYQTNFHQAINDAHQITLCLLSTNCVLDPVIYCFLTKKFRKHLSEKFYSMRSSRKCSRATSDTCTEVIVPANQTPIVSLKN</sequence>
<proteinExistence type="evidence at protein level"/>
<accession>Q62035</accession>
<accession>B1B170</accession>
<accession>Q8C017</accession>
<organism>
    <name type="scientific">Mus musculus</name>
    <name type="common">Mouse</name>
    <dbReference type="NCBI Taxonomy" id="10090"/>
    <lineage>
        <taxon>Eukaryota</taxon>
        <taxon>Metazoa</taxon>
        <taxon>Chordata</taxon>
        <taxon>Craniata</taxon>
        <taxon>Vertebrata</taxon>
        <taxon>Euteleostomi</taxon>
        <taxon>Mammalia</taxon>
        <taxon>Eutheria</taxon>
        <taxon>Euarchontoglires</taxon>
        <taxon>Glires</taxon>
        <taxon>Rodentia</taxon>
        <taxon>Myomorpha</taxon>
        <taxon>Muroidea</taxon>
        <taxon>Muridae</taxon>
        <taxon>Murinae</taxon>
        <taxon>Mus</taxon>
        <taxon>Mus</taxon>
    </lineage>
</organism>
<name>PTAFR_MOUSE</name>
<gene>
    <name type="primary">Ptafr</name>
</gene>
<protein>
    <recommendedName>
        <fullName>Platelet-activating factor receptor</fullName>
        <shortName>PAF-R</shortName>
        <shortName>PAFr</shortName>
    </recommendedName>
</protein>
<reference key="1">
    <citation type="journal article" date="1996" name="Biochem. J.">
        <title>A murine platelet-activating factor receptor gene: cloning, chromosomal localization and up-regulation of expression by lipopolysaccharide in peritoneal resident macrophages.</title>
        <authorList>
            <person name="Ishii S."/>
            <person name="Matsuda Y."/>
            <person name="Nakamura M."/>
            <person name="Waga I."/>
            <person name="Kume K."/>
            <person name="Izumi T."/>
            <person name="Noma M."/>
            <person name="Shimizu T."/>
        </authorList>
    </citation>
    <scope>NUCLEOTIDE SEQUENCE [GENOMIC DNA]</scope>
    <scope>TISSUE SPECIFICITY</scope>
    <scope>INDUCTION</scope>
    <source>
        <strain>129/Sv</strain>
    </source>
</reference>
<reference key="2">
    <citation type="journal article" date="2005" name="Science">
        <title>The transcriptional landscape of the mammalian genome.</title>
        <authorList>
            <person name="Carninci P."/>
            <person name="Kasukawa T."/>
            <person name="Katayama S."/>
            <person name="Gough J."/>
            <person name="Frith M.C."/>
            <person name="Maeda N."/>
            <person name="Oyama R."/>
            <person name="Ravasi T."/>
            <person name="Lenhard B."/>
            <person name="Wells C."/>
            <person name="Kodzius R."/>
            <person name="Shimokawa K."/>
            <person name="Bajic V.B."/>
            <person name="Brenner S.E."/>
            <person name="Batalov S."/>
            <person name="Forrest A.R."/>
            <person name="Zavolan M."/>
            <person name="Davis M.J."/>
            <person name="Wilming L.G."/>
            <person name="Aidinis V."/>
            <person name="Allen J.E."/>
            <person name="Ambesi-Impiombato A."/>
            <person name="Apweiler R."/>
            <person name="Aturaliya R.N."/>
            <person name="Bailey T.L."/>
            <person name="Bansal M."/>
            <person name="Baxter L."/>
            <person name="Beisel K.W."/>
            <person name="Bersano T."/>
            <person name="Bono H."/>
            <person name="Chalk A.M."/>
            <person name="Chiu K.P."/>
            <person name="Choudhary V."/>
            <person name="Christoffels A."/>
            <person name="Clutterbuck D.R."/>
            <person name="Crowe M.L."/>
            <person name="Dalla E."/>
            <person name="Dalrymple B.P."/>
            <person name="de Bono B."/>
            <person name="Della Gatta G."/>
            <person name="di Bernardo D."/>
            <person name="Down T."/>
            <person name="Engstrom P."/>
            <person name="Fagiolini M."/>
            <person name="Faulkner G."/>
            <person name="Fletcher C.F."/>
            <person name="Fukushima T."/>
            <person name="Furuno M."/>
            <person name="Futaki S."/>
            <person name="Gariboldi M."/>
            <person name="Georgii-Hemming P."/>
            <person name="Gingeras T.R."/>
            <person name="Gojobori T."/>
            <person name="Green R.E."/>
            <person name="Gustincich S."/>
            <person name="Harbers M."/>
            <person name="Hayashi Y."/>
            <person name="Hensch T.K."/>
            <person name="Hirokawa N."/>
            <person name="Hill D."/>
            <person name="Huminiecki L."/>
            <person name="Iacono M."/>
            <person name="Ikeo K."/>
            <person name="Iwama A."/>
            <person name="Ishikawa T."/>
            <person name="Jakt M."/>
            <person name="Kanapin A."/>
            <person name="Katoh M."/>
            <person name="Kawasawa Y."/>
            <person name="Kelso J."/>
            <person name="Kitamura H."/>
            <person name="Kitano H."/>
            <person name="Kollias G."/>
            <person name="Krishnan S.P."/>
            <person name="Kruger A."/>
            <person name="Kummerfeld S.K."/>
            <person name="Kurochkin I.V."/>
            <person name="Lareau L.F."/>
            <person name="Lazarevic D."/>
            <person name="Lipovich L."/>
            <person name="Liu J."/>
            <person name="Liuni S."/>
            <person name="McWilliam S."/>
            <person name="Madan Babu M."/>
            <person name="Madera M."/>
            <person name="Marchionni L."/>
            <person name="Matsuda H."/>
            <person name="Matsuzawa S."/>
            <person name="Miki H."/>
            <person name="Mignone F."/>
            <person name="Miyake S."/>
            <person name="Morris K."/>
            <person name="Mottagui-Tabar S."/>
            <person name="Mulder N."/>
            <person name="Nakano N."/>
            <person name="Nakauchi H."/>
            <person name="Ng P."/>
            <person name="Nilsson R."/>
            <person name="Nishiguchi S."/>
            <person name="Nishikawa S."/>
            <person name="Nori F."/>
            <person name="Ohara O."/>
            <person name="Okazaki Y."/>
            <person name="Orlando V."/>
            <person name="Pang K.C."/>
            <person name="Pavan W.J."/>
            <person name="Pavesi G."/>
            <person name="Pesole G."/>
            <person name="Petrovsky N."/>
            <person name="Piazza S."/>
            <person name="Reed J."/>
            <person name="Reid J.F."/>
            <person name="Ring B.Z."/>
            <person name="Ringwald M."/>
            <person name="Rost B."/>
            <person name="Ruan Y."/>
            <person name="Salzberg S.L."/>
            <person name="Sandelin A."/>
            <person name="Schneider C."/>
            <person name="Schoenbach C."/>
            <person name="Sekiguchi K."/>
            <person name="Semple C.A."/>
            <person name="Seno S."/>
            <person name="Sessa L."/>
            <person name="Sheng Y."/>
            <person name="Shibata Y."/>
            <person name="Shimada H."/>
            <person name="Shimada K."/>
            <person name="Silva D."/>
            <person name="Sinclair B."/>
            <person name="Sperling S."/>
            <person name="Stupka E."/>
            <person name="Sugiura K."/>
            <person name="Sultana R."/>
            <person name="Takenaka Y."/>
            <person name="Taki K."/>
            <person name="Tammoja K."/>
            <person name="Tan S.L."/>
            <person name="Tang S."/>
            <person name="Taylor M.S."/>
            <person name="Tegner J."/>
            <person name="Teichmann S.A."/>
            <person name="Ueda H.R."/>
            <person name="van Nimwegen E."/>
            <person name="Verardo R."/>
            <person name="Wei C.L."/>
            <person name="Yagi K."/>
            <person name="Yamanishi H."/>
            <person name="Zabarovsky E."/>
            <person name="Zhu S."/>
            <person name="Zimmer A."/>
            <person name="Hide W."/>
            <person name="Bult C."/>
            <person name="Grimmond S.M."/>
            <person name="Teasdale R.D."/>
            <person name="Liu E.T."/>
            <person name="Brusic V."/>
            <person name="Quackenbush J."/>
            <person name="Wahlestedt C."/>
            <person name="Mattick J.S."/>
            <person name="Hume D.A."/>
            <person name="Kai C."/>
            <person name="Sasaki D."/>
            <person name="Tomaru Y."/>
            <person name="Fukuda S."/>
            <person name="Kanamori-Katayama M."/>
            <person name="Suzuki M."/>
            <person name="Aoki J."/>
            <person name="Arakawa T."/>
            <person name="Iida J."/>
            <person name="Imamura K."/>
            <person name="Itoh M."/>
            <person name="Kato T."/>
            <person name="Kawaji H."/>
            <person name="Kawagashira N."/>
            <person name="Kawashima T."/>
            <person name="Kojima M."/>
            <person name="Kondo S."/>
            <person name="Konno H."/>
            <person name="Nakano K."/>
            <person name="Ninomiya N."/>
            <person name="Nishio T."/>
            <person name="Okada M."/>
            <person name="Plessy C."/>
            <person name="Shibata K."/>
            <person name="Shiraki T."/>
            <person name="Suzuki S."/>
            <person name="Tagami M."/>
            <person name="Waki K."/>
            <person name="Watahiki A."/>
            <person name="Okamura-Oho Y."/>
            <person name="Suzuki H."/>
            <person name="Kawai J."/>
            <person name="Hayashizaki Y."/>
        </authorList>
    </citation>
    <scope>NUCLEOTIDE SEQUENCE [LARGE SCALE MRNA]</scope>
    <source>
        <strain>C57BL/6J</strain>
        <tissue>Olfactory bulb</tissue>
    </source>
</reference>
<reference key="3">
    <citation type="journal article" date="2009" name="PLoS Biol.">
        <title>Lineage-specific biology revealed by a finished genome assembly of the mouse.</title>
        <authorList>
            <person name="Church D.M."/>
            <person name="Goodstadt L."/>
            <person name="Hillier L.W."/>
            <person name="Zody M.C."/>
            <person name="Goldstein S."/>
            <person name="She X."/>
            <person name="Bult C.J."/>
            <person name="Agarwala R."/>
            <person name="Cherry J.L."/>
            <person name="DiCuccio M."/>
            <person name="Hlavina W."/>
            <person name="Kapustin Y."/>
            <person name="Meric P."/>
            <person name="Maglott D."/>
            <person name="Birtle Z."/>
            <person name="Marques A.C."/>
            <person name="Graves T."/>
            <person name="Zhou S."/>
            <person name="Teague B."/>
            <person name="Potamousis K."/>
            <person name="Churas C."/>
            <person name="Place M."/>
            <person name="Herschleb J."/>
            <person name="Runnheim R."/>
            <person name="Forrest D."/>
            <person name="Amos-Landgraf J."/>
            <person name="Schwartz D.C."/>
            <person name="Cheng Z."/>
            <person name="Lindblad-Toh K."/>
            <person name="Eichler E.E."/>
            <person name="Ponting C.P."/>
        </authorList>
    </citation>
    <scope>NUCLEOTIDE SEQUENCE [LARGE SCALE GENOMIC DNA]</scope>
    <source>
        <strain>C57BL/6J</strain>
    </source>
</reference>
<reference key="4">
    <citation type="journal article" date="2009" name="Immunity">
        <title>The phagosomal proteome in interferon-gamma-activated macrophages.</title>
        <authorList>
            <person name="Trost M."/>
            <person name="English L."/>
            <person name="Lemieux S."/>
            <person name="Courcelles M."/>
            <person name="Desjardins M."/>
            <person name="Thibault P."/>
        </authorList>
    </citation>
    <scope>IDENTIFICATION BY MASS SPECTROMETRY [LARGE SCALE ANALYSIS]</scope>
</reference>
<evidence type="ECO:0000250" key="1"/>
<evidence type="ECO:0000255" key="2"/>
<evidence type="ECO:0000255" key="3">
    <source>
        <dbReference type="PROSITE-ProRule" id="PRU00521"/>
    </source>
</evidence>
<evidence type="ECO:0000269" key="4">
    <source>
    </source>
</evidence>
<evidence type="ECO:0000305" key="5"/>
<comment type="function">
    <text>Receptor for platelet activating factor, a chemotactic phospholipid mediator that possesses potent inflammatory, smooth-muscle contractile and hypotensive activity. Seems to mediate its action via a G protein that activates a phosphatidylinositol-calcium second messenger system.</text>
</comment>
<comment type="subunit">
    <text evidence="1">Interacts with ARRB1.</text>
</comment>
<comment type="subcellular location">
    <subcellularLocation>
        <location>Cell membrane</location>
        <topology>Multi-pass membrane protein</topology>
    </subcellularLocation>
</comment>
<comment type="tissue specificity">
    <text evidence="4">Found in a range of organs. Expressed most strongly in spleen, followed by skeletal muscle, lung and small intestine. Expressed at moderate levels in the heart. Expressed at relatively low levels in the brain, liver and kidney.</text>
</comment>
<comment type="induction">
    <text evidence="4">By lipopolysaccharide (LPS).</text>
</comment>
<comment type="similarity">
    <text evidence="3">Belongs to the G-protein coupled receptor 1 family.</text>
</comment>